<feature type="chain" id="PRO_0000077324" description="Type II restriction enzyme HpaI">
    <location>
        <begin position="1"/>
        <end position="254"/>
    </location>
</feature>
<name>T2H1_HAEPA</name>
<proteinExistence type="evidence at protein level"/>
<sequence>MKYEEINFKVPVESPYYPNYSQCVIERIYSILRNQKDMGDDRIIINTNLKKGLPLENINKIAGPMIEAWAEEVFSGIRDNRDNQYNLINVEAQERLGISDIILQFQVNNNVITGNVDVKATSNDIPDSGKSPNITSFSRIRTAYVKDPNFIFIILSIKHSVYVKRNEYTNLMDGIMQIIDFNVYDLKYISDSDISYNPALGTGQIQIKDIHYVSSQKRTTWQMCQLLDLKYLRSKKRTIEQFYNEAKRNKWIKD</sequence>
<accession>P29537</accession>
<evidence type="ECO:0000269" key="1">
    <source>
    </source>
</evidence>
<evidence type="ECO:0000303" key="2">
    <source>
    </source>
</evidence>
<evidence type="ECO:0000303" key="3">
    <source>
    </source>
</evidence>
<protein>
    <recommendedName>
        <fullName evidence="2">Type II restriction enzyme HpaI</fullName>
        <shortName evidence="3">R.HpaI</shortName>
        <ecNumber>3.1.21.4</ecNumber>
    </recommendedName>
    <alternativeName>
        <fullName>Endonuclease HpaI</fullName>
    </alternativeName>
    <alternativeName>
        <fullName>Type-2 restriction enzyme HpaI</fullName>
    </alternativeName>
</protein>
<keyword id="KW-0903">Direct protein sequencing</keyword>
<keyword id="KW-0255">Endonuclease</keyword>
<keyword id="KW-0378">Hydrolase</keyword>
<keyword id="KW-0540">Nuclease</keyword>
<keyword id="KW-0680">Restriction system</keyword>
<reference key="1">
    <citation type="journal article" date="1992" name="Nucleic Acids Res.">
        <title>Cloning and expression of the HpaI restriction-modification genes.</title>
        <authorList>
            <person name="Ito H."/>
            <person name="Shimato H."/>
            <person name="Sadaoka A."/>
            <person name="Kotani H."/>
            <person name="Kimizuka F."/>
            <person name="Kato I."/>
        </authorList>
    </citation>
    <scope>NUCLEOTIDE SEQUENCE [GENOMIC DNA]</scope>
    <scope>PROTEIN SEQUENCE OF 1-22</scope>
    <scope>FUNCTION</scope>
    <source>
        <strain>ATCC 49669</strain>
    </source>
</reference>
<reference key="2">
    <citation type="journal article" date="2003" name="Nucleic Acids Res.">
        <title>A nomenclature for restriction enzymes, DNA methyltransferases, homing endonucleases and their genes.</title>
        <authorList>
            <person name="Roberts R.J."/>
            <person name="Belfort M."/>
            <person name="Bestor T."/>
            <person name="Bhagwat A.S."/>
            <person name="Bickle T.A."/>
            <person name="Bitinaite J."/>
            <person name="Blumenthal R.M."/>
            <person name="Degtyarev S.K."/>
            <person name="Dryden D.T."/>
            <person name="Dybvig K."/>
            <person name="Firman K."/>
            <person name="Gromova E.S."/>
            <person name="Gumport R.I."/>
            <person name="Halford S.E."/>
            <person name="Hattman S."/>
            <person name="Heitman J."/>
            <person name="Hornby D.P."/>
            <person name="Janulaitis A."/>
            <person name="Jeltsch A."/>
            <person name="Josephsen J."/>
            <person name="Kiss A."/>
            <person name="Klaenhammer T.R."/>
            <person name="Kobayashi I."/>
            <person name="Kong H."/>
            <person name="Krueger D.H."/>
            <person name="Lacks S."/>
            <person name="Marinus M.G."/>
            <person name="Miyahara M."/>
            <person name="Morgan R.D."/>
            <person name="Murray N.E."/>
            <person name="Nagaraja V."/>
            <person name="Piekarowicz A."/>
            <person name="Pingoud A."/>
            <person name="Raleigh E."/>
            <person name="Rao D.N."/>
            <person name="Reich N."/>
            <person name="Repin V.E."/>
            <person name="Selker E.U."/>
            <person name="Shaw P.C."/>
            <person name="Stein D.C."/>
            <person name="Stoddard B.L."/>
            <person name="Szybalski W."/>
            <person name="Trautner T.A."/>
            <person name="Van Etten J.L."/>
            <person name="Vitor J.M."/>
            <person name="Wilson G.G."/>
            <person name="Xu S.Y."/>
        </authorList>
    </citation>
    <scope>NOMENCLATURE</scope>
    <scope>SUBTYPE</scope>
</reference>
<dbReference type="EC" id="3.1.21.4"/>
<dbReference type="EMBL" id="D10668">
    <property type="protein sequence ID" value="BAA01518.1"/>
    <property type="molecule type" value="Genomic_DNA"/>
</dbReference>
<dbReference type="PIR" id="S28680">
    <property type="entry name" value="S28680"/>
</dbReference>
<dbReference type="REBASE" id="1158">
    <property type="entry name" value="HpaI"/>
</dbReference>
<dbReference type="PRO" id="PR:P29537"/>
<dbReference type="GO" id="GO:0009036">
    <property type="term" value="F:type II site-specific deoxyribonuclease activity"/>
    <property type="evidence" value="ECO:0007669"/>
    <property type="project" value="UniProtKB-EC"/>
</dbReference>
<dbReference type="GO" id="GO:0009307">
    <property type="term" value="P:DNA restriction-modification system"/>
    <property type="evidence" value="ECO:0007669"/>
    <property type="project" value="UniProtKB-KW"/>
</dbReference>
<gene>
    <name type="primary">hpaIR</name>
</gene>
<organism>
    <name type="scientific">Haemophilus parainfluenzae</name>
    <dbReference type="NCBI Taxonomy" id="729"/>
    <lineage>
        <taxon>Bacteria</taxon>
        <taxon>Pseudomonadati</taxon>
        <taxon>Pseudomonadota</taxon>
        <taxon>Gammaproteobacteria</taxon>
        <taxon>Pasteurellales</taxon>
        <taxon>Pasteurellaceae</taxon>
        <taxon>Haemophilus</taxon>
    </lineage>
</organism>
<comment type="function">
    <text evidence="1 2">A P subtype restriction enzyme that recognizes the double-stranded sequence 5'-GTTAAC-3' and cleaves after T-3.</text>
</comment>
<comment type="catalytic activity">
    <reaction>
        <text>Endonucleolytic cleavage of DNA to give specific double-stranded fragments with terminal 5'-phosphates.</text>
        <dbReference type="EC" id="3.1.21.4"/>
    </reaction>
</comment>